<comment type="function">
    <text evidence="1">Catalyzes a trans-dehydration via an enolate intermediate.</text>
</comment>
<comment type="catalytic activity">
    <reaction evidence="1">
        <text>3-dehydroquinate = 3-dehydroshikimate + H2O</text>
        <dbReference type="Rhea" id="RHEA:21096"/>
        <dbReference type="ChEBI" id="CHEBI:15377"/>
        <dbReference type="ChEBI" id="CHEBI:16630"/>
        <dbReference type="ChEBI" id="CHEBI:32364"/>
        <dbReference type="EC" id="4.2.1.10"/>
    </reaction>
</comment>
<comment type="pathway">
    <text evidence="1">Metabolic intermediate biosynthesis; chorismate biosynthesis; chorismate from D-erythrose 4-phosphate and phosphoenolpyruvate: step 3/7.</text>
</comment>
<comment type="subunit">
    <text evidence="1">Homododecamer.</text>
</comment>
<comment type="similarity">
    <text evidence="1">Belongs to the type-II 3-dehydroquinase family.</text>
</comment>
<organism>
    <name type="scientific">Tolumonas auensis (strain DSM 9187 / NBRC 110442 / TA 4)</name>
    <dbReference type="NCBI Taxonomy" id="595494"/>
    <lineage>
        <taxon>Bacteria</taxon>
        <taxon>Pseudomonadati</taxon>
        <taxon>Pseudomonadota</taxon>
        <taxon>Gammaproteobacteria</taxon>
        <taxon>Aeromonadales</taxon>
        <taxon>Aeromonadaceae</taxon>
        <taxon>Tolumonas</taxon>
    </lineage>
</organism>
<dbReference type="EC" id="4.2.1.10" evidence="1"/>
<dbReference type="EMBL" id="CP001616">
    <property type="protein sequence ID" value="ACQ94122.1"/>
    <property type="molecule type" value="Genomic_DNA"/>
</dbReference>
<dbReference type="RefSeq" id="WP_015879571.1">
    <property type="nucleotide sequence ID" value="NC_012691.1"/>
</dbReference>
<dbReference type="SMR" id="C4LAE7"/>
<dbReference type="STRING" id="595494.Tola_2528"/>
<dbReference type="KEGG" id="tau:Tola_2528"/>
<dbReference type="eggNOG" id="COG0757">
    <property type="taxonomic scope" value="Bacteria"/>
</dbReference>
<dbReference type="HOGENOM" id="CLU_090968_1_0_6"/>
<dbReference type="OrthoDB" id="9790793at2"/>
<dbReference type="UniPathway" id="UPA00053">
    <property type="reaction ID" value="UER00086"/>
</dbReference>
<dbReference type="Proteomes" id="UP000009073">
    <property type="component" value="Chromosome"/>
</dbReference>
<dbReference type="GO" id="GO:0003855">
    <property type="term" value="F:3-dehydroquinate dehydratase activity"/>
    <property type="evidence" value="ECO:0007669"/>
    <property type="project" value="UniProtKB-UniRule"/>
</dbReference>
<dbReference type="GO" id="GO:0008652">
    <property type="term" value="P:amino acid biosynthetic process"/>
    <property type="evidence" value="ECO:0007669"/>
    <property type="project" value="UniProtKB-KW"/>
</dbReference>
<dbReference type="GO" id="GO:0009073">
    <property type="term" value="P:aromatic amino acid family biosynthetic process"/>
    <property type="evidence" value="ECO:0007669"/>
    <property type="project" value="UniProtKB-KW"/>
</dbReference>
<dbReference type="GO" id="GO:0009423">
    <property type="term" value="P:chorismate biosynthetic process"/>
    <property type="evidence" value="ECO:0007669"/>
    <property type="project" value="UniProtKB-UniRule"/>
</dbReference>
<dbReference type="GO" id="GO:0019631">
    <property type="term" value="P:quinate catabolic process"/>
    <property type="evidence" value="ECO:0007669"/>
    <property type="project" value="TreeGrafter"/>
</dbReference>
<dbReference type="CDD" id="cd00466">
    <property type="entry name" value="DHQase_II"/>
    <property type="match status" value="1"/>
</dbReference>
<dbReference type="Gene3D" id="3.40.50.9100">
    <property type="entry name" value="Dehydroquinase, class II"/>
    <property type="match status" value="1"/>
</dbReference>
<dbReference type="HAMAP" id="MF_00169">
    <property type="entry name" value="AroQ"/>
    <property type="match status" value="1"/>
</dbReference>
<dbReference type="InterPro" id="IPR001874">
    <property type="entry name" value="DHquinase_II"/>
</dbReference>
<dbReference type="InterPro" id="IPR018509">
    <property type="entry name" value="DHquinase_II_CS"/>
</dbReference>
<dbReference type="InterPro" id="IPR036441">
    <property type="entry name" value="DHquinase_II_sf"/>
</dbReference>
<dbReference type="NCBIfam" id="TIGR01088">
    <property type="entry name" value="aroQ"/>
    <property type="match status" value="1"/>
</dbReference>
<dbReference type="NCBIfam" id="NF003804">
    <property type="entry name" value="PRK05395.1-1"/>
    <property type="match status" value="1"/>
</dbReference>
<dbReference type="NCBIfam" id="NF003805">
    <property type="entry name" value="PRK05395.1-2"/>
    <property type="match status" value="1"/>
</dbReference>
<dbReference type="NCBIfam" id="NF003806">
    <property type="entry name" value="PRK05395.1-3"/>
    <property type="match status" value="1"/>
</dbReference>
<dbReference type="NCBIfam" id="NF003807">
    <property type="entry name" value="PRK05395.1-4"/>
    <property type="match status" value="1"/>
</dbReference>
<dbReference type="PANTHER" id="PTHR21272">
    <property type="entry name" value="CATABOLIC 3-DEHYDROQUINASE"/>
    <property type="match status" value="1"/>
</dbReference>
<dbReference type="PANTHER" id="PTHR21272:SF3">
    <property type="entry name" value="CATABOLIC 3-DEHYDROQUINASE"/>
    <property type="match status" value="1"/>
</dbReference>
<dbReference type="Pfam" id="PF01220">
    <property type="entry name" value="DHquinase_II"/>
    <property type="match status" value="1"/>
</dbReference>
<dbReference type="PIRSF" id="PIRSF001399">
    <property type="entry name" value="DHquinase_II"/>
    <property type="match status" value="1"/>
</dbReference>
<dbReference type="SUPFAM" id="SSF52304">
    <property type="entry name" value="Type II 3-dehydroquinate dehydratase"/>
    <property type="match status" value="1"/>
</dbReference>
<dbReference type="PROSITE" id="PS01029">
    <property type="entry name" value="DEHYDROQUINASE_II"/>
    <property type="match status" value="1"/>
</dbReference>
<protein>
    <recommendedName>
        <fullName evidence="1">3-dehydroquinate dehydratase</fullName>
        <shortName evidence="1">3-dehydroquinase</shortName>
        <ecNumber evidence="1">4.2.1.10</ecNumber>
    </recommendedName>
    <alternativeName>
        <fullName evidence="1">Type II DHQase</fullName>
    </alternativeName>
</protein>
<feature type="chain" id="PRO_1000203679" description="3-dehydroquinate dehydratase">
    <location>
        <begin position="1"/>
        <end position="152"/>
    </location>
</feature>
<feature type="active site" description="Proton acceptor" evidence="1">
    <location>
        <position position="26"/>
    </location>
</feature>
<feature type="active site" description="Proton donor" evidence="1">
    <location>
        <position position="103"/>
    </location>
</feature>
<feature type="binding site" evidence="1">
    <location>
        <position position="77"/>
    </location>
    <ligand>
        <name>substrate</name>
    </ligand>
</feature>
<feature type="binding site" evidence="1">
    <location>
        <position position="83"/>
    </location>
    <ligand>
        <name>substrate</name>
    </ligand>
</feature>
<feature type="binding site" evidence="1">
    <location>
        <position position="90"/>
    </location>
    <ligand>
        <name>substrate</name>
    </ligand>
</feature>
<feature type="binding site" evidence="1">
    <location>
        <begin position="104"/>
        <end position="105"/>
    </location>
    <ligand>
        <name>substrate</name>
    </ligand>
</feature>
<feature type="binding site" evidence="1">
    <location>
        <position position="114"/>
    </location>
    <ligand>
        <name>substrate</name>
    </ligand>
</feature>
<feature type="site" description="Transition state stabilizer" evidence="1">
    <location>
        <position position="21"/>
    </location>
</feature>
<reference key="1">
    <citation type="submission" date="2009-05" db="EMBL/GenBank/DDBJ databases">
        <title>Complete sequence of Tolumonas auensis DSM 9187.</title>
        <authorList>
            <consortium name="US DOE Joint Genome Institute"/>
            <person name="Lucas S."/>
            <person name="Copeland A."/>
            <person name="Lapidus A."/>
            <person name="Glavina del Rio T."/>
            <person name="Tice H."/>
            <person name="Bruce D."/>
            <person name="Goodwin L."/>
            <person name="Pitluck S."/>
            <person name="Chertkov O."/>
            <person name="Brettin T."/>
            <person name="Detter J.C."/>
            <person name="Han C."/>
            <person name="Larimer F."/>
            <person name="Land M."/>
            <person name="Hauser L."/>
            <person name="Kyrpides N."/>
            <person name="Mikhailova N."/>
            <person name="Spring S."/>
            <person name="Beller H."/>
        </authorList>
    </citation>
    <scope>NUCLEOTIDE SEQUENCE [LARGE SCALE GENOMIC DNA]</scope>
    <source>
        <strain>DSM 9187 / NBRC 110442 / TA 4</strain>
    </source>
</reference>
<accession>C4LAE7</accession>
<name>AROQ_TOLAT</name>
<evidence type="ECO:0000255" key="1">
    <source>
        <dbReference type="HAMAP-Rule" id="MF_00169"/>
    </source>
</evidence>
<sequence>MTAKFRILVLNGPNLNLLGKREPGIYGAATLDDIVGRLQQLAAELDVELTHKQSNAEYELVDTIHQAMGTVDFILINPAAFTHTSVAIRDALLGVAIPFIEIHLSNVHAREPFRHHSFLSDVAKGVICGLGADGYEFALTAAVRHLERSSNN</sequence>
<keyword id="KW-0028">Amino-acid biosynthesis</keyword>
<keyword id="KW-0057">Aromatic amino acid biosynthesis</keyword>
<keyword id="KW-0456">Lyase</keyword>
<keyword id="KW-1185">Reference proteome</keyword>
<gene>
    <name evidence="1" type="primary">aroQ</name>
    <name type="ordered locus">Tola_2528</name>
</gene>
<proteinExistence type="inferred from homology"/>